<proteinExistence type="evidence at protein level"/>
<comment type="function">
    <text>Regulator of membrane trafficking. May be required for secretion of cell wall components in cells.</text>
</comment>
<comment type="subunit">
    <text evidence="3">Interacts with TCTP1.</text>
</comment>
<comment type="subcellular location">
    <subcellularLocation>
        <location evidence="4">Early endosome membrane</location>
    </subcellularLocation>
    <subcellularLocation>
        <location evidence="9">Golgi apparatus</location>
        <location evidence="9">trans-Golgi network membrane</location>
        <topology evidence="9">Lipid-anchor</topology>
    </subcellularLocation>
</comment>
<comment type="tissue specificity">
    <text evidence="2">Expressed in roots, stems, leaves and flowers. Expressed in tips of growing root hair cells.</text>
</comment>
<comment type="similarity">
    <text evidence="7">Belongs to the small GTPase superfamily. Rab family.</text>
</comment>
<evidence type="ECO:0000250" key="1"/>
<evidence type="ECO:0000269" key="2">
    <source>
    </source>
</evidence>
<evidence type="ECO:0000269" key="3">
    <source>
    </source>
</evidence>
<evidence type="ECO:0000269" key="4">
    <source>
    </source>
</evidence>
<evidence type="ECO:0000303" key="5">
    <source>
    </source>
</evidence>
<evidence type="ECO:0000303" key="6">
    <source>
    </source>
</evidence>
<evidence type="ECO:0000305" key="7"/>
<evidence type="ECO:0000305" key="8">
    <source>
    </source>
</evidence>
<evidence type="ECO:0000305" key="9">
    <source>
    </source>
</evidence>
<evidence type="ECO:0000312" key="10">
    <source>
        <dbReference type="Araport" id="AT4G39990"/>
    </source>
</evidence>
<evidence type="ECO:0000312" key="11">
    <source>
        <dbReference type="EMBL" id="CAB38912.1"/>
    </source>
</evidence>
<evidence type="ECO:0007744" key="12">
    <source>
    </source>
</evidence>
<gene>
    <name evidence="5" type="primary">RABA4B</name>
    <name evidence="6" type="synonym">GB3</name>
    <name evidence="8" type="synonym">RAB11G</name>
    <name evidence="10" type="ordered locus">At4g39990</name>
    <name evidence="11" type="ORF">T5J17.160</name>
</gene>
<organism>
    <name type="scientific">Arabidopsis thaliana</name>
    <name type="common">Mouse-ear cress</name>
    <dbReference type="NCBI Taxonomy" id="3702"/>
    <lineage>
        <taxon>Eukaryota</taxon>
        <taxon>Viridiplantae</taxon>
        <taxon>Streptophyta</taxon>
        <taxon>Embryophyta</taxon>
        <taxon>Tracheophyta</taxon>
        <taxon>Spermatophyta</taxon>
        <taxon>Magnoliopsida</taxon>
        <taxon>eudicotyledons</taxon>
        <taxon>Gunneridae</taxon>
        <taxon>Pentapetalae</taxon>
        <taxon>rosids</taxon>
        <taxon>malvids</taxon>
        <taxon>Brassicales</taxon>
        <taxon>Brassicaceae</taxon>
        <taxon>Camelineae</taxon>
        <taxon>Arabidopsis</taxon>
    </lineage>
</organism>
<dbReference type="EMBL" id="U46926">
    <property type="protein sequence ID" value="AAA87884.1"/>
    <property type="molecule type" value="mRNA"/>
</dbReference>
<dbReference type="EMBL" id="AL035708">
    <property type="protein sequence ID" value="CAB38912.1"/>
    <property type="molecule type" value="Genomic_DNA"/>
</dbReference>
<dbReference type="EMBL" id="AL161596">
    <property type="protein sequence ID" value="CAB80662.1"/>
    <property type="molecule type" value="Genomic_DNA"/>
</dbReference>
<dbReference type="EMBL" id="CP002687">
    <property type="protein sequence ID" value="AEE87150.1"/>
    <property type="molecule type" value="Genomic_DNA"/>
</dbReference>
<dbReference type="EMBL" id="AY072448">
    <property type="protein sequence ID" value="AAL62440.1"/>
    <property type="molecule type" value="mRNA"/>
</dbReference>
<dbReference type="EMBL" id="AY128914">
    <property type="protein sequence ID" value="AAM91314.1"/>
    <property type="molecule type" value="mRNA"/>
</dbReference>
<dbReference type="EMBL" id="AY088624">
    <property type="protein sequence ID" value="AAM66946.1"/>
    <property type="molecule type" value="mRNA"/>
</dbReference>
<dbReference type="PIR" id="T06105">
    <property type="entry name" value="T06105"/>
</dbReference>
<dbReference type="RefSeq" id="NP_195709.1">
    <property type="nucleotide sequence ID" value="NM_120163.4"/>
</dbReference>
<dbReference type="SMR" id="Q9SMQ6"/>
<dbReference type="BioGRID" id="15440">
    <property type="interactions" value="2"/>
</dbReference>
<dbReference type="FunCoup" id="Q9SMQ6">
    <property type="interactions" value="354"/>
</dbReference>
<dbReference type="IntAct" id="Q9SMQ6">
    <property type="interactions" value="1"/>
</dbReference>
<dbReference type="MINT" id="Q9SMQ6"/>
<dbReference type="STRING" id="3702.Q9SMQ6"/>
<dbReference type="GlyGen" id="Q9SMQ6">
    <property type="glycosylation" value="1 site"/>
</dbReference>
<dbReference type="iPTMnet" id="Q9SMQ6"/>
<dbReference type="PaxDb" id="3702-AT4G39990.1"/>
<dbReference type="ProteomicsDB" id="225903"/>
<dbReference type="EnsemblPlants" id="AT4G39990.1">
    <property type="protein sequence ID" value="AT4G39990.1"/>
    <property type="gene ID" value="AT4G39990"/>
</dbReference>
<dbReference type="GeneID" id="830160"/>
<dbReference type="Gramene" id="AT4G39990.1">
    <property type="protein sequence ID" value="AT4G39990.1"/>
    <property type="gene ID" value="AT4G39990"/>
</dbReference>
<dbReference type="KEGG" id="ath:AT4G39990"/>
<dbReference type="Araport" id="AT4G39990"/>
<dbReference type="TAIR" id="AT4G39990">
    <property type="gene designation" value="RABA4B"/>
</dbReference>
<dbReference type="eggNOG" id="KOG0087">
    <property type="taxonomic scope" value="Eukaryota"/>
</dbReference>
<dbReference type="HOGENOM" id="CLU_041217_23_0_1"/>
<dbReference type="InParanoid" id="Q9SMQ6"/>
<dbReference type="OMA" id="TSHAGCF"/>
<dbReference type="PhylomeDB" id="Q9SMQ6"/>
<dbReference type="CD-CODE" id="4299E36E">
    <property type="entry name" value="Nucleolus"/>
</dbReference>
<dbReference type="PRO" id="PR:Q9SMQ6"/>
<dbReference type="Proteomes" id="UP000006548">
    <property type="component" value="Chromosome 4"/>
</dbReference>
<dbReference type="ExpressionAtlas" id="Q9SMQ6">
    <property type="expression patterns" value="baseline and differential"/>
</dbReference>
<dbReference type="GO" id="GO:0031901">
    <property type="term" value="C:early endosome membrane"/>
    <property type="evidence" value="ECO:0000314"/>
    <property type="project" value="UniProtKB"/>
</dbReference>
<dbReference type="GO" id="GO:0005886">
    <property type="term" value="C:plasma membrane"/>
    <property type="evidence" value="ECO:0007005"/>
    <property type="project" value="TAIR"/>
</dbReference>
<dbReference type="GO" id="GO:0090404">
    <property type="term" value="C:pollen tube tip"/>
    <property type="evidence" value="ECO:0000314"/>
    <property type="project" value="TAIR"/>
</dbReference>
<dbReference type="GO" id="GO:0035619">
    <property type="term" value="C:root hair tip"/>
    <property type="evidence" value="ECO:0000314"/>
    <property type="project" value="TAIR"/>
</dbReference>
<dbReference type="GO" id="GO:0032588">
    <property type="term" value="C:trans-Golgi network membrane"/>
    <property type="evidence" value="ECO:0000314"/>
    <property type="project" value="UniProtKB"/>
</dbReference>
<dbReference type="GO" id="GO:0005525">
    <property type="term" value="F:GTP binding"/>
    <property type="evidence" value="ECO:0007669"/>
    <property type="project" value="UniProtKB-KW"/>
</dbReference>
<dbReference type="GO" id="GO:0003924">
    <property type="term" value="F:GTPase activity"/>
    <property type="evidence" value="ECO:0007669"/>
    <property type="project" value="InterPro"/>
</dbReference>
<dbReference type="GO" id="GO:0019900">
    <property type="term" value="F:kinase binding"/>
    <property type="evidence" value="ECO:0000353"/>
    <property type="project" value="UniProtKB"/>
</dbReference>
<dbReference type="GO" id="GO:0042546">
    <property type="term" value="P:cell wall biogenesis"/>
    <property type="evidence" value="ECO:0000315"/>
    <property type="project" value="TAIR"/>
</dbReference>
<dbReference type="GO" id="GO:0032456">
    <property type="term" value="P:endocytic recycling"/>
    <property type="evidence" value="ECO:0000314"/>
    <property type="project" value="TAIR"/>
</dbReference>
<dbReference type="GO" id="GO:0015031">
    <property type="term" value="P:protein transport"/>
    <property type="evidence" value="ECO:0007669"/>
    <property type="project" value="UniProtKB-KW"/>
</dbReference>
<dbReference type="CDD" id="cd01868">
    <property type="entry name" value="Rab11_like"/>
    <property type="match status" value="1"/>
</dbReference>
<dbReference type="FunFam" id="3.40.50.300:FF:000274">
    <property type="entry name" value="ras-related protein RABA5a"/>
    <property type="match status" value="1"/>
</dbReference>
<dbReference type="Gene3D" id="3.40.50.300">
    <property type="entry name" value="P-loop containing nucleotide triphosphate hydrolases"/>
    <property type="match status" value="1"/>
</dbReference>
<dbReference type="InterPro" id="IPR027417">
    <property type="entry name" value="P-loop_NTPase"/>
</dbReference>
<dbReference type="InterPro" id="IPR050209">
    <property type="entry name" value="Rab_GTPases_membrane_traffic"/>
</dbReference>
<dbReference type="InterPro" id="IPR005225">
    <property type="entry name" value="Small_GTP-bd"/>
</dbReference>
<dbReference type="InterPro" id="IPR001806">
    <property type="entry name" value="Small_GTPase"/>
</dbReference>
<dbReference type="NCBIfam" id="TIGR00231">
    <property type="entry name" value="small_GTP"/>
    <property type="match status" value="1"/>
</dbReference>
<dbReference type="PANTHER" id="PTHR47979">
    <property type="entry name" value="DRAB11-RELATED"/>
    <property type="match status" value="1"/>
</dbReference>
<dbReference type="Pfam" id="PF00071">
    <property type="entry name" value="Ras"/>
    <property type="match status" value="1"/>
</dbReference>
<dbReference type="PRINTS" id="PR00449">
    <property type="entry name" value="RASTRNSFRMNG"/>
</dbReference>
<dbReference type="SMART" id="SM00177">
    <property type="entry name" value="ARF"/>
    <property type="match status" value="1"/>
</dbReference>
<dbReference type="SMART" id="SM00175">
    <property type="entry name" value="RAB"/>
    <property type="match status" value="1"/>
</dbReference>
<dbReference type="SMART" id="SM00176">
    <property type="entry name" value="RAN"/>
    <property type="match status" value="1"/>
</dbReference>
<dbReference type="SMART" id="SM00173">
    <property type="entry name" value="RAS"/>
    <property type="match status" value="1"/>
</dbReference>
<dbReference type="SMART" id="SM00174">
    <property type="entry name" value="RHO"/>
    <property type="match status" value="1"/>
</dbReference>
<dbReference type="SUPFAM" id="SSF52540">
    <property type="entry name" value="P-loop containing nucleoside triphosphate hydrolases"/>
    <property type="match status" value="1"/>
</dbReference>
<dbReference type="PROSITE" id="PS51419">
    <property type="entry name" value="RAB"/>
    <property type="match status" value="1"/>
</dbReference>
<name>RAA4B_ARATH</name>
<keyword id="KW-0007">Acetylation</keyword>
<keyword id="KW-0967">Endosome</keyword>
<keyword id="KW-0333">Golgi apparatus</keyword>
<keyword id="KW-0342">GTP-binding</keyword>
<keyword id="KW-0449">Lipoprotein</keyword>
<keyword id="KW-0472">Membrane</keyword>
<keyword id="KW-0547">Nucleotide-binding</keyword>
<keyword id="KW-0636">Prenylation</keyword>
<keyword id="KW-0653">Protein transport</keyword>
<keyword id="KW-1185">Reference proteome</keyword>
<keyword id="KW-0813">Transport</keyword>
<feature type="initiator methionine" description="Removed" evidence="12">
    <location>
        <position position="1"/>
    </location>
</feature>
<feature type="chain" id="PRO_0000407345" description="Ras-related protein RABA4b">
    <location>
        <begin position="2"/>
        <end position="224"/>
    </location>
</feature>
<feature type="short sequence motif" description="Effector region" evidence="1">
    <location>
        <begin position="46"/>
        <end position="54"/>
    </location>
</feature>
<feature type="binding site" evidence="1">
    <location>
        <begin position="24"/>
        <end position="31"/>
    </location>
    <ligand>
        <name>GTP</name>
        <dbReference type="ChEBI" id="CHEBI:37565"/>
    </ligand>
</feature>
<feature type="binding site" evidence="1">
    <location>
        <begin position="72"/>
        <end position="76"/>
    </location>
    <ligand>
        <name>GTP</name>
        <dbReference type="ChEBI" id="CHEBI:37565"/>
    </ligand>
</feature>
<feature type="binding site" evidence="1">
    <location>
        <begin position="130"/>
        <end position="133"/>
    </location>
    <ligand>
        <name>GTP</name>
        <dbReference type="ChEBI" id="CHEBI:37565"/>
    </ligand>
</feature>
<feature type="binding site" evidence="1">
    <location>
        <begin position="160"/>
        <end position="161"/>
    </location>
    <ligand>
        <name>GTP</name>
        <dbReference type="ChEBI" id="CHEBI:37565"/>
    </ligand>
</feature>
<feature type="modified residue" description="N-acetylalanine" evidence="12">
    <location>
        <position position="2"/>
    </location>
</feature>
<feature type="lipid moiety-binding region" description="S-geranylgeranyl cysteine" evidence="1">
    <location>
        <position position="220"/>
    </location>
</feature>
<feature type="lipid moiety-binding region" description="S-geranylgeranyl cysteine" evidence="1">
    <location>
        <position position="221"/>
    </location>
</feature>
<feature type="sequence conflict" description="In Ref. 1; AAA87884." evidence="7" ref="1">
    <original>G</original>
    <variation>C</variation>
    <location>
        <position position="191"/>
    </location>
</feature>
<feature type="sequence conflict" description="In Ref. 5; AAM66946." evidence="7" ref="5">
    <original>G</original>
    <variation>A</variation>
    <location>
        <position position="208"/>
    </location>
</feature>
<reference key="1">
    <citation type="journal article" date="1996" name="Plant Mol. Biol.">
        <title>Identification and isoprenylation of plant GTP-binding proteins.</title>
        <authorList>
            <person name="Biermann B.J."/>
            <person name="Randall S.K."/>
            <person name="Crowell D.N."/>
        </authorList>
    </citation>
    <scope>NUCLEOTIDE SEQUENCE [MRNA]</scope>
</reference>
<reference key="2">
    <citation type="journal article" date="1999" name="Nature">
        <title>Sequence and analysis of chromosome 4 of the plant Arabidopsis thaliana.</title>
        <authorList>
            <person name="Mayer K.F.X."/>
            <person name="Schueller C."/>
            <person name="Wambutt R."/>
            <person name="Murphy G."/>
            <person name="Volckaert G."/>
            <person name="Pohl T."/>
            <person name="Duesterhoeft A."/>
            <person name="Stiekema W."/>
            <person name="Entian K.-D."/>
            <person name="Terryn N."/>
            <person name="Harris B."/>
            <person name="Ansorge W."/>
            <person name="Brandt P."/>
            <person name="Grivell L.A."/>
            <person name="Rieger M."/>
            <person name="Weichselgartner M."/>
            <person name="de Simone V."/>
            <person name="Obermaier B."/>
            <person name="Mache R."/>
            <person name="Mueller M."/>
            <person name="Kreis M."/>
            <person name="Delseny M."/>
            <person name="Puigdomenech P."/>
            <person name="Watson M."/>
            <person name="Schmidtheini T."/>
            <person name="Reichert B."/>
            <person name="Portetelle D."/>
            <person name="Perez-Alonso M."/>
            <person name="Boutry M."/>
            <person name="Bancroft I."/>
            <person name="Vos P."/>
            <person name="Hoheisel J."/>
            <person name="Zimmermann W."/>
            <person name="Wedler H."/>
            <person name="Ridley P."/>
            <person name="Langham S.-A."/>
            <person name="McCullagh B."/>
            <person name="Bilham L."/>
            <person name="Robben J."/>
            <person name="van der Schueren J."/>
            <person name="Grymonprez B."/>
            <person name="Chuang Y.-J."/>
            <person name="Vandenbussche F."/>
            <person name="Braeken M."/>
            <person name="Weltjens I."/>
            <person name="Voet M."/>
            <person name="Bastiaens I."/>
            <person name="Aert R."/>
            <person name="Defoor E."/>
            <person name="Weitzenegger T."/>
            <person name="Bothe G."/>
            <person name="Ramsperger U."/>
            <person name="Hilbert H."/>
            <person name="Braun M."/>
            <person name="Holzer E."/>
            <person name="Brandt A."/>
            <person name="Peters S."/>
            <person name="van Staveren M."/>
            <person name="Dirkse W."/>
            <person name="Mooijman P."/>
            <person name="Klein Lankhorst R."/>
            <person name="Rose M."/>
            <person name="Hauf J."/>
            <person name="Koetter P."/>
            <person name="Berneiser S."/>
            <person name="Hempel S."/>
            <person name="Feldpausch M."/>
            <person name="Lamberth S."/>
            <person name="Van den Daele H."/>
            <person name="De Keyser A."/>
            <person name="Buysshaert C."/>
            <person name="Gielen J."/>
            <person name="Villarroel R."/>
            <person name="De Clercq R."/>
            <person name="van Montagu M."/>
            <person name="Rogers J."/>
            <person name="Cronin A."/>
            <person name="Quail M.A."/>
            <person name="Bray-Allen S."/>
            <person name="Clark L."/>
            <person name="Doggett J."/>
            <person name="Hall S."/>
            <person name="Kay M."/>
            <person name="Lennard N."/>
            <person name="McLay K."/>
            <person name="Mayes R."/>
            <person name="Pettett A."/>
            <person name="Rajandream M.A."/>
            <person name="Lyne M."/>
            <person name="Benes V."/>
            <person name="Rechmann S."/>
            <person name="Borkova D."/>
            <person name="Bloecker H."/>
            <person name="Scharfe M."/>
            <person name="Grimm M."/>
            <person name="Loehnert T.-H."/>
            <person name="Dose S."/>
            <person name="de Haan M."/>
            <person name="Maarse A.C."/>
            <person name="Schaefer M."/>
            <person name="Mueller-Auer S."/>
            <person name="Gabel C."/>
            <person name="Fuchs M."/>
            <person name="Fartmann B."/>
            <person name="Granderath K."/>
            <person name="Dauner D."/>
            <person name="Herzl A."/>
            <person name="Neumann S."/>
            <person name="Argiriou A."/>
            <person name="Vitale D."/>
            <person name="Liguori R."/>
            <person name="Piravandi E."/>
            <person name="Massenet O."/>
            <person name="Quigley F."/>
            <person name="Clabauld G."/>
            <person name="Muendlein A."/>
            <person name="Felber R."/>
            <person name="Schnabl S."/>
            <person name="Hiller R."/>
            <person name="Schmidt W."/>
            <person name="Lecharny A."/>
            <person name="Aubourg S."/>
            <person name="Chefdor F."/>
            <person name="Cooke R."/>
            <person name="Berger C."/>
            <person name="Monfort A."/>
            <person name="Casacuberta E."/>
            <person name="Gibbons T."/>
            <person name="Weber N."/>
            <person name="Vandenbol M."/>
            <person name="Bargues M."/>
            <person name="Terol J."/>
            <person name="Torres A."/>
            <person name="Perez-Perez A."/>
            <person name="Purnelle B."/>
            <person name="Bent E."/>
            <person name="Johnson S."/>
            <person name="Tacon D."/>
            <person name="Jesse T."/>
            <person name="Heijnen L."/>
            <person name="Schwarz S."/>
            <person name="Scholler P."/>
            <person name="Heber S."/>
            <person name="Francs P."/>
            <person name="Bielke C."/>
            <person name="Frishman D."/>
            <person name="Haase D."/>
            <person name="Lemcke K."/>
            <person name="Mewes H.-W."/>
            <person name="Stocker S."/>
            <person name="Zaccaria P."/>
            <person name="Bevan M."/>
            <person name="Wilson R.K."/>
            <person name="de la Bastide M."/>
            <person name="Habermann K."/>
            <person name="Parnell L."/>
            <person name="Dedhia N."/>
            <person name="Gnoj L."/>
            <person name="Schutz K."/>
            <person name="Huang E."/>
            <person name="Spiegel L."/>
            <person name="Sekhon M."/>
            <person name="Murray J."/>
            <person name="Sheet P."/>
            <person name="Cordes M."/>
            <person name="Abu-Threideh J."/>
            <person name="Stoneking T."/>
            <person name="Kalicki J."/>
            <person name="Graves T."/>
            <person name="Harmon G."/>
            <person name="Edwards J."/>
            <person name="Latreille P."/>
            <person name="Courtney L."/>
            <person name="Cloud J."/>
            <person name="Abbott A."/>
            <person name="Scott K."/>
            <person name="Johnson D."/>
            <person name="Minx P."/>
            <person name="Bentley D."/>
            <person name="Fulton B."/>
            <person name="Miller N."/>
            <person name="Greco T."/>
            <person name="Kemp K."/>
            <person name="Kramer J."/>
            <person name="Fulton L."/>
            <person name="Mardis E."/>
            <person name="Dante M."/>
            <person name="Pepin K."/>
            <person name="Hillier L.W."/>
            <person name="Nelson J."/>
            <person name="Spieth J."/>
            <person name="Ryan E."/>
            <person name="Andrews S."/>
            <person name="Geisel C."/>
            <person name="Layman D."/>
            <person name="Du H."/>
            <person name="Ali J."/>
            <person name="Berghoff A."/>
            <person name="Jones K."/>
            <person name="Drone K."/>
            <person name="Cotton M."/>
            <person name="Joshu C."/>
            <person name="Antonoiu B."/>
            <person name="Zidanic M."/>
            <person name="Strong C."/>
            <person name="Sun H."/>
            <person name="Lamar B."/>
            <person name="Yordan C."/>
            <person name="Ma P."/>
            <person name="Zhong J."/>
            <person name="Preston R."/>
            <person name="Vil D."/>
            <person name="Shekher M."/>
            <person name="Matero A."/>
            <person name="Shah R."/>
            <person name="Swaby I.K."/>
            <person name="O'Shaughnessy A."/>
            <person name="Rodriguez M."/>
            <person name="Hoffman J."/>
            <person name="Till S."/>
            <person name="Granat S."/>
            <person name="Shohdy N."/>
            <person name="Hasegawa A."/>
            <person name="Hameed A."/>
            <person name="Lodhi M."/>
            <person name="Johnson A."/>
            <person name="Chen E."/>
            <person name="Marra M.A."/>
            <person name="Martienssen R."/>
            <person name="McCombie W.R."/>
        </authorList>
    </citation>
    <scope>NUCLEOTIDE SEQUENCE [LARGE SCALE GENOMIC DNA]</scope>
    <source>
        <strain>cv. Columbia</strain>
    </source>
</reference>
<reference key="3">
    <citation type="journal article" date="2017" name="Plant J.">
        <title>Araport11: a complete reannotation of the Arabidopsis thaliana reference genome.</title>
        <authorList>
            <person name="Cheng C.Y."/>
            <person name="Krishnakumar V."/>
            <person name="Chan A.P."/>
            <person name="Thibaud-Nissen F."/>
            <person name="Schobel S."/>
            <person name="Town C.D."/>
        </authorList>
    </citation>
    <scope>GENOME REANNOTATION</scope>
    <source>
        <strain>cv. Columbia</strain>
    </source>
</reference>
<reference key="4">
    <citation type="journal article" date="2003" name="Science">
        <title>Empirical analysis of transcriptional activity in the Arabidopsis genome.</title>
        <authorList>
            <person name="Yamada K."/>
            <person name="Lim J."/>
            <person name="Dale J.M."/>
            <person name="Chen H."/>
            <person name="Shinn P."/>
            <person name="Palm C.J."/>
            <person name="Southwick A.M."/>
            <person name="Wu H.C."/>
            <person name="Kim C.J."/>
            <person name="Nguyen M."/>
            <person name="Pham P.K."/>
            <person name="Cheuk R.F."/>
            <person name="Karlin-Newmann G."/>
            <person name="Liu S.X."/>
            <person name="Lam B."/>
            <person name="Sakano H."/>
            <person name="Wu T."/>
            <person name="Yu G."/>
            <person name="Miranda M."/>
            <person name="Quach H.L."/>
            <person name="Tripp M."/>
            <person name="Chang C.H."/>
            <person name="Lee J.M."/>
            <person name="Toriumi M.J."/>
            <person name="Chan M.M."/>
            <person name="Tang C.C."/>
            <person name="Onodera C.S."/>
            <person name="Deng J.M."/>
            <person name="Akiyama K."/>
            <person name="Ansari Y."/>
            <person name="Arakawa T."/>
            <person name="Banh J."/>
            <person name="Banno F."/>
            <person name="Bowser L."/>
            <person name="Brooks S.Y."/>
            <person name="Carninci P."/>
            <person name="Chao Q."/>
            <person name="Choy N."/>
            <person name="Enju A."/>
            <person name="Goldsmith A.D."/>
            <person name="Gurjal M."/>
            <person name="Hansen N.F."/>
            <person name="Hayashizaki Y."/>
            <person name="Johnson-Hopson C."/>
            <person name="Hsuan V.W."/>
            <person name="Iida K."/>
            <person name="Karnes M."/>
            <person name="Khan S."/>
            <person name="Koesema E."/>
            <person name="Ishida J."/>
            <person name="Jiang P.X."/>
            <person name="Jones T."/>
            <person name="Kawai J."/>
            <person name="Kamiya A."/>
            <person name="Meyers C."/>
            <person name="Nakajima M."/>
            <person name="Narusaka M."/>
            <person name="Seki M."/>
            <person name="Sakurai T."/>
            <person name="Satou M."/>
            <person name="Tamse R."/>
            <person name="Vaysberg M."/>
            <person name="Wallender E.K."/>
            <person name="Wong C."/>
            <person name="Yamamura Y."/>
            <person name="Yuan S."/>
            <person name="Shinozaki K."/>
            <person name="Davis R.W."/>
            <person name="Theologis A."/>
            <person name="Ecker J.R."/>
        </authorList>
    </citation>
    <scope>NUCLEOTIDE SEQUENCE [LARGE SCALE MRNA]</scope>
    <source>
        <strain>cv. Columbia</strain>
    </source>
</reference>
<reference key="5">
    <citation type="submission" date="2002-03" db="EMBL/GenBank/DDBJ databases">
        <title>Full-length cDNA from Arabidopsis thaliana.</title>
        <authorList>
            <person name="Brover V.V."/>
            <person name="Troukhan M.E."/>
            <person name="Alexandrov N.A."/>
            <person name="Lu Y.-P."/>
            <person name="Flavell R.B."/>
            <person name="Feldmann K.A."/>
        </authorList>
    </citation>
    <scope>NUCLEOTIDE SEQUENCE [LARGE SCALE MRNA]</scope>
</reference>
<reference key="6">
    <citation type="journal article" date="2003" name="Plant Physiol.">
        <title>Analysis of the small GTPase gene superfamily of Arabidopsis.</title>
        <authorList>
            <person name="Vernoud V."/>
            <person name="Horton A.C."/>
            <person name="Yang Z."/>
            <person name="Nielsen E."/>
        </authorList>
    </citation>
    <scope>GENE FAMILY</scope>
    <scope>NOMENCLATURE</scope>
</reference>
<reference key="7">
    <citation type="journal article" date="2004" name="Plant Cell">
        <title>The Arabidopsis Rab GTPase RabA4b localizes to the tips of growing root hair cells.</title>
        <authorList>
            <person name="Preuss M.L."/>
            <person name="Serna J."/>
            <person name="Falbel T.G."/>
            <person name="Bednarek S.Y."/>
            <person name="Nielsen E."/>
        </authorList>
    </citation>
    <scope>TISSUE SPECIFICITY</scope>
</reference>
<reference key="8">
    <citation type="journal article" date="2010" name="Proc. Natl. Acad. Sci. U.S.A.">
        <title>Translationally controlled tumor protein is a conserved mitotic growth integrator in animals and plants.</title>
        <authorList>
            <person name="Brioudes F."/>
            <person name="Thierry A.M."/>
            <person name="Chambrier P."/>
            <person name="Mollereau B."/>
            <person name="Bendahmane M."/>
        </authorList>
    </citation>
    <scope>INTERACTION WITH TCTP1</scope>
</reference>
<reference key="9">
    <citation type="journal article" date="2011" name="Traffic">
        <title>Electron tomography of RabA4b- and PI-4Kbeta1-labeled trans Golgi network compartments in Arabidopsis.</title>
        <authorList>
            <person name="Kang B.H."/>
            <person name="Nielsen E."/>
            <person name="Preuss M.L."/>
            <person name="Mastronarde D."/>
            <person name="Staehelin L.A."/>
        </authorList>
    </citation>
    <scope>SUBCELLULAR LOCATION</scope>
</reference>
<reference key="10">
    <citation type="journal article" date="2012" name="Mol. Cell. Proteomics">
        <title>Comparative large-scale characterisation of plant vs. mammal proteins reveals similar and idiosyncratic N-alpha acetylation features.</title>
        <authorList>
            <person name="Bienvenut W.V."/>
            <person name="Sumpton D."/>
            <person name="Martinez A."/>
            <person name="Lilla S."/>
            <person name="Espagne C."/>
            <person name="Meinnel T."/>
            <person name="Giglione C."/>
        </authorList>
    </citation>
    <scope>ACETYLATION [LARGE SCALE ANALYSIS] AT ALA-2</scope>
    <scope>CLEAVAGE OF INITIATOR METHIONINE [LARGE SCALE ANALYSIS]</scope>
    <scope>IDENTIFICATION BY MASS SPECTROMETRY [LARGE SCALE ANALYSIS]</scope>
</reference>
<sequence length="224" mass="24407">MAGGGGYGGASGKVDYVFKVVLIGDSAVGKSQLLARFARDEFSMDSKATIGVEFQTRTLSIEQKSIKAQIWDTAGQERYRAVTSAYYRGAVGAMLVYDMTKRETFEHIPRWLEELRAHADKNIVIILIGNKSDLEDQRAVPTEDAKEFAEKEGLFFLETSALNATNVENSFNTLMTQIYNTVNKKNLASEGDSNNPGSLAGKKILIPGSGQEIPAKTSTCCTSS</sequence>
<protein>
    <recommendedName>
        <fullName evidence="5">Ras-related protein RABA4b</fullName>
        <shortName evidence="5">AtRABA4b</shortName>
    </recommendedName>
    <alternativeName>
        <fullName evidence="6">Ras-related protein GB3</fullName>
        <shortName evidence="6">AtGB3</shortName>
    </alternativeName>
    <alternativeName>
        <fullName evidence="8">Ras-related protein Rab11G</fullName>
        <shortName evidence="8">AtRab11G</shortName>
    </alternativeName>
</protein>
<accession>Q9SMQ6</accession>
<accession>Q38923</accession>
<accession>Q8L958</accession>